<organism>
    <name type="scientific">Thioalkalivibrio sulfidiphilus (strain HL-EbGR7)</name>
    <dbReference type="NCBI Taxonomy" id="396588"/>
    <lineage>
        <taxon>Bacteria</taxon>
        <taxon>Pseudomonadati</taxon>
        <taxon>Pseudomonadota</taxon>
        <taxon>Gammaproteobacteria</taxon>
        <taxon>Chromatiales</taxon>
        <taxon>Ectothiorhodospiraceae</taxon>
        <taxon>Thioalkalivibrio</taxon>
    </lineage>
</organism>
<feature type="chain" id="PRO_1000196001" description="Large ribosomal subunit protein bL32">
    <location>
        <begin position="1"/>
        <end position="62"/>
    </location>
</feature>
<feature type="region of interest" description="Disordered" evidence="2">
    <location>
        <begin position="28"/>
        <end position="62"/>
    </location>
</feature>
<sequence>MAVQQARTTPSKRGMRRSHDALKNAALSIEPTTGEVHRRHHISPDGFYRGRQVIKAKEQDEE</sequence>
<proteinExistence type="inferred from homology"/>
<reference key="1">
    <citation type="journal article" date="2011" name="Stand. Genomic Sci.">
        <title>Complete genome sequence of 'Thioalkalivibrio sulfidophilus' HL-EbGr7.</title>
        <authorList>
            <person name="Muyzer G."/>
            <person name="Sorokin D.Y."/>
            <person name="Mavromatis K."/>
            <person name="Lapidus A."/>
            <person name="Clum A."/>
            <person name="Ivanova N."/>
            <person name="Pati A."/>
            <person name="d'Haeseleer P."/>
            <person name="Woyke T."/>
            <person name="Kyrpides N.C."/>
        </authorList>
    </citation>
    <scope>NUCLEOTIDE SEQUENCE [LARGE SCALE GENOMIC DNA]</scope>
    <source>
        <strain>HL-EbGR7</strain>
    </source>
</reference>
<protein>
    <recommendedName>
        <fullName evidence="1">Large ribosomal subunit protein bL32</fullName>
    </recommendedName>
    <alternativeName>
        <fullName evidence="3">50S ribosomal protein L32</fullName>
    </alternativeName>
</protein>
<dbReference type="EMBL" id="CP001339">
    <property type="protein sequence ID" value="ACL72994.1"/>
    <property type="molecule type" value="Genomic_DNA"/>
</dbReference>
<dbReference type="RefSeq" id="WP_012638473.1">
    <property type="nucleotide sequence ID" value="NC_011901.1"/>
</dbReference>
<dbReference type="SMR" id="B8GSX9"/>
<dbReference type="STRING" id="396588.Tgr7_1913"/>
<dbReference type="KEGG" id="tgr:Tgr7_1913"/>
<dbReference type="eggNOG" id="COG0333">
    <property type="taxonomic scope" value="Bacteria"/>
</dbReference>
<dbReference type="HOGENOM" id="CLU_129084_2_1_6"/>
<dbReference type="OrthoDB" id="9801927at2"/>
<dbReference type="Proteomes" id="UP000002383">
    <property type="component" value="Chromosome"/>
</dbReference>
<dbReference type="GO" id="GO:0015934">
    <property type="term" value="C:large ribosomal subunit"/>
    <property type="evidence" value="ECO:0007669"/>
    <property type="project" value="InterPro"/>
</dbReference>
<dbReference type="GO" id="GO:0003735">
    <property type="term" value="F:structural constituent of ribosome"/>
    <property type="evidence" value="ECO:0007669"/>
    <property type="project" value="InterPro"/>
</dbReference>
<dbReference type="GO" id="GO:0006412">
    <property type="term" value="P:translation"/>
    <property type="evidence" value="ECO:0007669"/>
    <property type="project" value="UniProtKB-UniRule"/>
</dbReference>
<dbReference type="HAMAP" id="MF_00340">
    <property type="entry name" value="Ribosomal_bL32"/>
    <property type="match status" value="1"/>
</dbReference>
<dbReference type="InterPro" id="IPR002677">
    <property type="entry name" value="Ribosomal_bL32"/>
</dbReference>
<dbReference type="InterPro" id="IPR044957">
    <property type="entry name" value="Ribosomal_bL32_bact"/>
</dbReference>
<dbReference type="InterPro" id="IPR011332">
    <property type="entry name" value="Ribosomal_zn-bd"/>
</dbReference>
<dbReference type="NCBIfam" id="TIGR01031">
    <property type="entry name" value="rpmF_bact"/>
    <property type="match status" value="1"/>
</dbReference>
<dbReference type="PANTHER" id="PTHR35534">
    <property type="entry name" value="50S RIBOSOMAL PROTEIN L32"/>
    <property type="match status" value="1"/>
</dbReference>
<dbReference type="PANTHER" id="PTHR35534:SF1">
    <property type="entry name" value="LARGE RIBOSOMAL SUBUNIT PROTEIN BL32"/>
    <property type="match status" value="1"/>
</dbReference>
<dbReference type="Pfam" id="PF01783">
    <property type="entry name" value="Ribosomal_L32p"/>
    <property type="match status" value="1"/>
</dbReference>
<dbReference type="SUPFAM" id="SSF57829">
    <property type="entry name" value="Zn-binding ribosomal proteins"/>
    <property type="match status" value="1"/>
</dbReference>
<gene>
    <name evidence="1" type="primary">rpmF</name>
    <name type="ordered locus">Tgr7_1913</name>
</gene>
<name>RL32_THISH</name>
<evidence type="ECO:0000255" key="1">
    <source>
        <dbReference type="HAMAP-Rule" id="MF_00340"/>
    </source>
</evidence>
<evidence type="ECO:0000256" key="2">
    <source>
        <dbReference type="SAM" id="MobiDB-lite"/>
    </source>
</evidence>
<evidence type="ECO:0000305" key="3"/>
<comment type="similarity">
    <text evidence="1">Belongs to the bacterial ribosomal protein bL32 family.</text>
</comment>
<accession>B8GSX9</accession>
<keyword id="KW-1185">Reference proteome</keyword>
<keyword id="KW-0687">Ribonucleoprotein</keyword>
<keyword id="KW-0689">Ribosomal protein</keyword>